<protein>
    <recommendedName>
        <fullName evidence="6">Amino acid oxidase imqH</fullName>
        <ecNumber evidence="8">1.5.3.-</ecNumber>
    </recommendedName>
    <alternativeName>
        <fullName evidence="6">Imizoquin biosynthesis cluster protein H</fullName>
    </alternativeName>
</protein>
<comment type="function">
    <text evidence="5">Nonribosomal peptide synthetase; part of the gene cluster that mediates the biosynthesis of imizoquins A to D, tripeptide-derived alkaloids that serve a protective role against oxidative stress that are essential for normal germination (PubMed:29182847). ImqB is a canonical three-module NRPS that assembles the tripeptide backbone of the imizoquins via condensation of Trp, Tyr, and Leu-derived precursors (PubMed:29182847). N-methylation by imqF and phenol oxidation by imqC, followed by cyclization via the FAD-dependent oxidase imqH carry out the three-step transformation of L-tyrosine into tetrahydroisoquinoline (PubMed:29182847). Importantly, this sequence requires the presence of a free amine in the tyrosine moiety, indicating that isoquinoline formation occurs prior to peptide bond formation (PubMed:29182847). The imidazolidin-4-one ring of imizoquins could form following additional oxidation of the methyl-derived bridgehead carbon by imqH (PubMed:29182847). Lastly, O-methylation by imqG and leucine hydroxylation by imqE complete biosynthesis of the imizoquins (PubMed:29182847).</text>
</comment>
<comment type="cofactor">
    <cofactor evidence="1">
        <name>FAD</name>
        <dbReference type="ChEBI" id="CHEBI:57692"/>
    </cofactor>
</comment>
<comment type="pathway">
    <text evidence="8">Secondary metabolite biosynthesis.</text>
</comment>
<comment type="subunit">
    <text evidence="1">Dimer.</text>
</comment>
<comment type="induction">
    <text evidence="5">Expression is down-regulated by ralstonins, lipopeptides produced by the plant pathogenic bacteria Ralstonia solanacearum (PubMed:29182847). Expression is positively regulated by the imizoquins cluster-specific transcription regulator imqK (PubMed:29182847).</text>
</comment>
<comment type="similarity">
    <text evidence="7">Belongs to the MSOX/MTOX family.</text>
</comment>
<dbReference type="EC" id="1.5.3.-" evidence="8"/>
<dbReference type="EMBL" id="EQ963479">
    <property type="protein sequence ID" value="EED49609.1"/>
    <property type="molecule type" value="Genomic_DNA"/>
</dbReference>
<dbReference type="RefSeq" id="XP_002379990.1">
    <property type="nucleotide sequence ID" value="XM_002379949.1"/>
</dbReference>
<dbReference type="SMR" id="B8NI25"/>
<dbReference type="STRING" id="332952.B8NI25"/>
<dbReference type="GlyCosmos" id="B8NI25">
    <property type="glycosylation" value="2 sites, No reported glycans"/>
</dbReference>
<dbReference type="EnsemblFungi" id="EED49609">
    <property type="protein sequence ID" value="EED49609"/>
    <property type="gene ID" value="AFLA_064300"/>
</dbReference>
<dbReference type="VEuPathDB" id="FungiDB:AFLA_008364"/>
<dbReference type="eggNOG" id="KOG2820">
    <property type="taxonomic scope" value="Eukaryota"/>
</dbReference>
<dbReference type="HOGENOM" id="CLU_007884_0_1_1"/>
<dbReference type="OMA" id="NCGWAES"/>
<dbReference type="GO" id="GO:0050660">
    <property type="term" value="F:flavin adenine dinucleotide binding"/>
    <property type="evidence" value="ECO:0007669"/>
    <property type="project" value="InterPro"/>
</dbReference>
<dbReference type="GO" id="GO:0050031">
    <property type="term" value="F:L-pipecolate oxidase activity"/>
    <property type="evidence" value="ECO:0007669"/>
    <property type="project" value="TreeGrafter"/>
</dbReference>
<dbReference type="GO" id="GO:0004657">
    <property type="term" value="F:proline dehydrogenase activity"/>
    <property type="evidence" value="ECO:0007669"/>
    <property type="project" value="TreeGrafter"/>
</dbReference>
<dbReference type="GO" id="GO:0008115">
    <property type="term" value="F:sarcosine oxidase activity"/>
    <property type="evidence" value="ECO:0007669"/>
    <property type="project" value="TreeGrafter"/>
</dbReference>
<dbReference type="Gene3D" id="3.30.9.10">
    <property type="entry name" value="D-Amino Acid Oxidase, subunit A, domain 2"/>
    <property type="match status" value="1"/>
</dbReference>
<dbReference type="Gene3D" id="3.50.50.60">
    <property type="entry name" value="FAD/NAD(P)-binding domain"/>
    <property type="match status" value="1"/>
</dbReference>
<dbReference type="InterPro" id="IPR006076">
    <property type="entry name" value="FAD-dep_OxRdtase"/>
</dbReference>
<dbReference type="InterPro" id="IPR036188">
    <property type="entry name" value="FAD/NAD-bd_sf"/>
</dbReference>
<dbReference type="InterPro" id="IPR045170">
    <property type="entry name" value="MTOX"/>
</dbReference>
<dbReference type="PANTHER" id="PTHR10961">
    <property type="entry name" value="PEROXISOMAL SARCOSINE OXIDASE"/>
    <property type="match status" value="1"/>
</dbReference>
<dbReference type="PANTHER" id="PTHR10961:SF46">
    <property type="entry name" value="PEROXISOMAL SARCOSINE OXIDASE"/>
    <property type="match status" value="1"/>
</dbReference>
<dbReference type="Pfam" id="PF01266">
    <property type="entry name" value="DAO"/>
    <property type="match status" value="1"/>
</dbReference>
<dbReference type="SUPFAM" id="SSF51905">
    <property type="entry name" value="FAD/NAD(P)-binding domain"/>
    <property type="match status" value="1"/>
</dbReference>
<feature type="signal peptide" evidence="3">
    <location>
        <begin position="1"/>
        <end position="22"/>
    </location>
</feature>
<feature type="chain" id="PRO_0000444554" description="Amino acid oxidase imqH">
    <location>
        <begin position="23"/>
        <end position="478"/>
    </location>
</feature>
<feature type="binding site" evidence="2">
    <location>
        <position position="14"/>
    </location>
    <ligand>
        <name>FAD</name>
        <dbReference type="ChEBI" id="CHEBI:57692"/>
    </ligand>
</feature>
<feature type="binding site" evidence="2">
    <location>
        <position position="15"/>
    </location>
    <ligand>
        <name>FAD</name>
        <dbReference type="ChEBI" id="CHEBI:57692"/>
    </ligand>
</feature>
<feature type="binding site" evidence="2">
    <location>
        <position position="38"/>
    </location>
    <ligand>
        <name>FAD</name>
        <dbReference type="ChEBI" id="CHEBI:57692"/>
    </ligand>
</feature>
<feature type="binding site" evidence="2">
    <location>
        <position position="53"/>
    </location>
    <ligand>
        <name>FAD</name>
        <dbReference type="ChEBI" id="CHEBI:57692"/>
    </ligand>
</feature>
<feature type="binding site" evidence="2">
    <location>
        <position position="57"/>
    </location>
    <ligand>
        <name>FAD</name>
        <dbReference type="ChEBI" id="CHEBI:57692"/>
    </ligand>
</feature>
<feature type="binding site" evidence="2">
    <location>
        <position position="58"/>
    </location>
    <ligand>
        <name>FAD</name>
        <dbReference type="ChEBI" id="CHEBI:57692"/>
    </ligand>
</feature>
<feature type="binding site" evidence="2">
    <location>
        <position position="63"/>
    </location>
    <ligand>
        <name>FAD</name>
        <dbReference type="ChEBI" id="CHEBI:57692"/>
    </ligand>
</feature>
<feature type="binding site" evidence="2">
    <location>
        <position position="64"/>
    </location>
    <ligand>
        <name>FAD</name>
        <dbReference type="ChEBI" id="CHEBI:57692"/>
    </ligand>
</feature>
<feature type="binding site" evidence="2">
    <location>
        <position position="208"/>
    </location>
    <ligand>
        <name>FAD</name>
        <dbReference type="ChEBI" id="CHEBI:57692"/>
    </ligand>
</feature>
<feature type="binding site" evidence="2">
    <location>
        <position position="432"/>
    </location>
    <ligand>
        <name>FAD</name>
        <dbReference type="ChEBI" id="CHEBI:57692"/>
    </ligand>
</feature>
<feature type="binding site" evidence="2">
    <location>
        <position position="433"/>
    </location>
    <ligand>
        <name>FAD</name>
        <dbReference type="ChEBI" id="CHEBI:57692"/>
    </ligand>
</feature>
<feature type="modified residue" description="S-8alpha-FAD cysteine" evidence="2">
    <location>
        <position position="399"/>
    </location>
</feature>
<feature type="glycosylation site" description="N-linked (GlcNAc...) asparagine" evidence="4">
    <location>
        <position position="97"/>
    </location>
</feature>
<feature type="glycosylation site" description="N-linked (GlcNAc...) asparagine" evidence="4">
    <location>
        <position position="167"/>
    </location>
</feature>
<reference key="1">
    <citation type="journal article" date="2015" name="Genome Announc.">
        <title>Genome sequence of Aspergillus flavus NRRL 3357, a strain that causes aflatoxin contamination of food and feed.</title>
        <authorList>
            <person name="Nierman W.C."/>
            <person name="Yu J."/>
            <person name="Fedorova-Abrams N.D."/>
            <person name="Losada L."/>
            <person name="Cleveland T.E."/>
            <person name="Bhatnagar D."/>
            <person name="Bennett J.W."/>
            <person name="Dean R."/>
            <person name="Payne G.A."/>
        </authorList>
    </citation>
    <scope>NUCLEOTIDE SEQUENCE [LARGE SCALE GENOMIC DNA]</scope>
    <source>
        <strain>ATCC 200026 / FGSC A1120 / IAM 13836 / NRRL 3357 / JCM 12722 / SRRC 167</strain>
    </source>
</reference>
<reference key="2">
    <citation type="journal article" date="2018" name="ACS Chem. Biol.">
        <title>NRPS-derived isoquinolines and lipopetides mediate antagonism between plant pathogenic fungi and bacteria.</title>
        <authorList>
            <person name="Khalid S."/>
            <person name="Baccile J.A."/>
            <person name="Spraker J.E."/>
            <person name="Tannous J."/>
            <person name="Imran M."/>
            <person name="Schroeder F.C."/>
            <person name="Keller N.P."/>
        </authorList>
    </citation>
    <scope>INDUCTION</scope>
    <scope>FUNCTION</scope>
    <scope>PATHWAY</scope>
</reference>
<evidence type="ECO:0000250" key="1">
    <source>
        <dbReference type="UniProtKB" id="O43029"/>
    </source>
</evidence>
<evidence type="ECO:0000250" key="2">
    <source>
        <dbReference type="UniProtKB" id="Q4WD43"/>
    </source>
</evidence>
<evidence type="ECO:0000255" key="3"/>
<evidence type="ECO:0000255" key="4">
    <source>
        <dbReference type="PROSITE-ProRule" id="PRU00498"/>
    </source>
</evidence>
<evidence type="ECO:0000269" key="5">
    <source>
    </source>
</evidence>
<evidence type="ECO:0000303" key="6">
    <source>
    </source>
</evidence>
<evidence type="ECO:0000305" key="7"/>
<evidence type="ECO:0000305" key="8">
    <source>
    </source>
</evidence>
<gene>
    <name evidence="6" type="primary">imqH</name>
    <name type="ORF">AFLA_064300</name>
</gene>
<proteinExistence type="evidence at transcript level"/>
<name>IMQH_ASPFN</name>
<sequence>MPAPKSIIIVGSGVFGLSTAHAMSQNNEFASSKITLIDSWNFEPSGPSASAPNPSAANFDTSRIIRSDYSHRTYATLAREAQQKWKADWGADGRYRNQSIVMIGEGHSMKQPMKALESINYVKHAYAQSYERAGRNSDIVHILDSESAVWEALGLGTPDEASKAGPNASELRGYRNHNCGWAESGATMAWLRQKTIHSDRIDIHIGQVVGLRVCSDSPSESHVNAEPRVCGVILDDGSQLTADLTVLAAGAMTPRLLGSPTLCDVYSETVAYVQLTEMERRELVRREFPLIVNVARKIFAIGPDNQGFLKLARFSWSGYRDVQKFAGVDVGPRSQAAPQEEDGYGACGDLDQTKLSPDVESTLQDYRGFLRELFRSGDGGDLGGLRNIATRPFAQVRRCWYADTVSTDFIVDYHPAYGKSLFIATGGSDHAFKFLPVLGERICELILQSDNGKAGPSESIQELQRLWKFPGGDSHAKL</sequence>
<keyword id="KW-0274">FAD</keyword>
<keyword id="KW-0285">Flavoprotein</keyword>
<keyword id="KW-0325">Glycoprotein</keyword>
<keyword id="KW-0560">Oxidoreductase</keyword>
<keyword id="KW-0732">Signal</keyword>
<accession>B8NI25</accession>
<organism>
    <name type="scientific">Aspergillus flavus (strain ATCC 200026 / FGSC A1120 / IAM 13836 / NRRL 3357 / JCM 12722 / SRRC 167)</name>
    <dbReference type="NCBI Taxonomy" id="332952"/>
    <lineage>
        <taxon>Eukaryota</taxon>
        <taxon>Fungi</taxon>
        <taxon>Dikarya</taxon>
        <taxon>Ascomycota</taxon>
        <taxon>Pezizomycotina</taxon>
        <taxon>Eurotiomycetes</taxon>
        <taxon>Eurotiomycetidae</taxon>
        <taxon>Eurotiales</taxon>
        <taxon>Aspergillaceae</taxon>
        <taxon>Aspergillus</taxon>
        <taxon>Aspergillus subgen. Circumdati</taxon>
    </lineage>
</organism>